<name>PNP_HELPJ</name>
<reference key="1">
    <citation type="journal article" date="1999" name="Nature">
        <title>Genomic sequence comparison of two unrelated isolates of the human gastric pathogen Helicobacter pylori.</title>
        <authorList>
            <person name="Alm R.A."/>
            <person name="Ling L.-S.L."/>
            <person name="Moir D.T."/>
            <person name="King B.L."/>
            <person name="Brown E.D."/>
            <person name="Doig P.C."/>
            <person name="Smith D.R."/>
            <person name="Noonan B."/>
            <person name="Guild B.C."/>
            <person name="deJonge B.L."/>
            <person name="Carmel G."/>
            <person name="Tummino P.J."/>
            <person name="Caruso A."/>
            <person name="Uria-Nickelsen M."/>
            <person name="Mills D.M."/>
            <person name="Ives C."/>
            <person name="Gibson R."/>
            <person name="Merberg D."/>
            <person name="Mills S.D."/>
            <person name="Jiang Q."/>
            <person name="Taylor D.E."/>
            <person name="Vovis G.F."/>
            <person name="Trust T.J."/>
        </authorList>
    </citation>
    <scope>NUCLEOTIDE SEQUENCE [LARGE SCALE GENOMIC DNA]</scope>
    <source>
        <strain>J99 / ATCC 700824</strain>
    </source>
</reference>
<dbReference type="EC" id="2.7.7.8" evidence="1"/>
<dbReference type="EMBL" id="AE001439">
    <property type="protein sequence ID" value="AAD06718.1"/>
    <property type="molecule type" value="Genomic_DNA"/>
</dbReference>
<dbReference type="PIR" id="E71845">
    <property type="entry name" value="E71845"/>
</dbReference>
<dbReference type="RefSeq" id="WP_000345782.1">
    <property type="nucleotide sequence ID" value="NC_000921.1"/>
</dbReference>
<dbReference type="SMR" id="Q9ZK11"/>
<dbReference type="KEGG" id="hpj:jhp_1136"/>
<dbReference type="eggNOG" id="COG1185">
    <property type="taxonomic scope" value="Bacteria"/>
</dbReference>
<dbReference type="Proteomes" id="UP000000804">
    <property type="component" value="Chromosome"/>
</dbReference>
<dbReference type="GO" id="GO:0005829">
    <property type="term" value="C:cytosol"/>
    <property type="evidence" value="ECO:0007669"/>
    <property type="project" value="TreeGrafter"/>
</dbReference>
<dbReference type="GO" id="GO:0000175">
    <property type="term" value="F:3'-5'-RNA exonuclease activity"/>
    <property type="evidence" value="ECO:0007669"/>
    <property type="project" value="TreeGrafter"/>
</dbReference>
<dbReference type="GO" id="GO:0000287">
    <property type="term" value="F:magnesium ion binding"/>
    <property type="evidence" value="ECO:0007669"/>
    <property type="project" value="UniProtKB-UniRule"/>
</dbReference>
<dbReference type="GO" id="GO:0004654">
    <property type="term" value="F:polyribonucleotide nucleotidyltransferase activity"/>
    <property type="evidence" value="ECO:0007669"/>
    <property type="project" value="UniProtKB-UniRule"/>
</dbReference>
<dbReference type="GO" id="GO:0003723">
    <property type="term" value="F:RNA binding"/>
    <property type="evidence" value="ECO:0007669"/>
    <property type="project" value="UniProtKB-UniRule"/>
</dbReference>
<dbReference type="GO" id="GO:0006402">
    <property type="term" value="P:mRNA catabolic process"/>
    <property type="evidence" value="ECO:0007669"/>
    <property type="project" value="UniProtKB-UniRule"/>
</dbReference>
<dbReference type="GO" id="GO:0006396">
    <property type="term" value="P:RNA processing"/>
    <property type="evidence" value="ECO:0007669"/>
    <property type="project" value="InterPro"/>
</dbReference>
<dbReference type="CDD" id="cd02393">
    <property type="entry name" value="KH-I_PNPase"/>
    <property type="match status" value="1"/>
</dbReference>
<dbReference type="CDD" id="cd11364">
    <property type="entry name" value="RNase_PH_PNPase_2"/>
    <property type="match status" value="1"/>
</dbReference>
<dbReference type="FunFam" id="3.30.1370.10:FF:000001">
    <property type="entry name" value="Polyribonucleotide nucleotidyltransferase"/>
    <property type="match status" value="1"/>
</dbReference>
<dbReference type="FunFam" id="3.30.230.70:FF:000026">
    <property type="entry name" value="Polyribonucleotide nucleotidyltransferase"/>
    <property type="match status" value="1"/>
</dbReference>
<dbReference type="FunFam" id="3.30.230.70:FF:000029">
    <property type="entry name" value="Polyribonucleotide nucleotidyltransferase"/>
    <property type="match status" value="1"/>
</dbReference>
<dbReference type="Gene3D" id="3.30.230.70">
    <property type="entry name" value="GHMP Kinase, N-terminal domain"/>
    <property type="match status" value="2"/>
</dbReference>
<dbReference type="Gene3D" id="3.30.1370.10">
    <property type="entry name" value="K Homology domain, type 1"/>
    <property type="match status" value="1"/>
</dbReference>
<dbReference type="Gene3D" id="2.40.50.140">
    <property type="entry name" value="Nucleic acid-binding proteins"/>
    <property type="match status" value="1"/>
</dbReference>
<dbReference type="HAMAP" id="MF_01595">
    <property type="entry name" value="PNPase"/>
    <property type="match status" value="1"/>
</dbReference>
<dbReference type="InterPro" id="IPR001247">
    <property type="entry name" value="ExoRNase_PH_dom1"/>
</dbReference>
<dbReference type="InterPro" id="IPR015847">
    <property type="entry name" value="ExoRNase_PH_dom2"/>
</dbReference>
<dbReference type="InterPro" id="IPR036345">
    <property type="entry name" value="ExoRNase_PH_dom2_sf"/>
</dbReference>
<dbReference type="InterPro" id="IPR004087">
    <property type="entry name" value="KH_dom"/>
</dbReference>
<dbReference type="InterPro" id="IPR004088">
    <property type="entry name" value="KH_dom_type_1"/>
</dbReference>
<dbReference type="InterPro" id="IPR036612">
    <property type="entry name" value="KH_dom_type_1_sf"/>
</dbReference>
<dbReference type="InterPro" id="IPR012340">
    <property type="entry name" value="NA-bd_OB-fold"/>
</dbReference>
<dbReference type="InterPro" id="IPR012162">
    <property type="entry name" value="PNPase"/>
</dbReference>
<dbReference type="InterPro" id="IPR027408">
    <property type="entry name" value="PNPase/RNase_PH_dom_sf"/>
</dbReference>
<dbReference type="InterPro" id="IPR036456">
    <property type="entry name" value="PNPase_PH_RNA-bd_sf"/>
</dbReference>
<dbReference type="InterPro" id="IPR020568">
    <property type="entry name" value="Ribosomal_Su5_D2-typ_SF"/>
</dbReference>
<dbReference type="InterPro" id="IPR003029">
    <property type="entry name" value="S1_domain"/>
</dbReference>
<dbReference type="NCBIfam" id="TIGR03591">
    <property type="entry name" value="polynuc_phos"/>
    <property type="match status" value="1"/>
</dbReference>
<dbReference type="NCBIfam" id="NF008805">
    <property type="entry name" value="PRK11824.1"/>
    <property type="match status" value="1"/>
</dbReference>
<dbReference type="PANTHER" id="PTHR11252">
    <property type="entry name" value="POLYRIBONUCLEOTIDE NUCLEOTIDYLTRANSFERASE"/>
    <property type="match status" value="1"/>
</dbReference>
<dbReference type="PANTHER" id="PTHR11252:SF0">
    <property type="entry name" value="POLYRIBONUCLEOTIDE NUCLEOTIDYLTRANSFERASE 1, MITOCHONDRIAL"/>
    <property type="match status" value="1"/>
</dbReference>
<dbReference type="Pfam" id="PF00013">
    <property type="entry name" value="KH_1"/>
    <property type="match status" value="1"/>
</dbReference>
<dbReference type="Pfam" id="PF01138">
    <property type="entry name" value="RNase_PH"/>
    <property type="match status" value="2"/>
</dbReference>
<dbReference type="Pfam" id="PF03725">
    <property type="entry name" value="RNase_PH_C"/>
    <property type="match status" value="2"/>
</dbReference>
<dbReference type="Pfam" id="PF00575">
    <property type="entry name" value="S1"/>
    <property type="match status" value="1"/>
</dbReference>
<dbReference type="PIRSF" id="PIRSF005499">
    <property type="entry name" value="PNPase"/>
    <property type="match status" value="1"/>
</dbReference>
<dbReference type="SMART" id="SM00322">
    <property type="entry name" value="KH"/>
    <property type="match status" value="1"/>
</dbReference>
<dbReference type="SMART" id="SM00316">
    <property type="entry name" value="S1"/>
    <property type="match status" value="1"/>
</dbReference>
<dbReference type="SUPFAM" id="SSF54791">
    <property type="entry name" value="Eukaryotic type KH-domain (KH-domain type I)"/>
    <property type="match status" value="1"/>
</dbReference>
<dbReference type="SUPFAM" id="SSF50249">
    <property type="entry name" value="Nucleic acid-binding proteins"/>
    <property type="match status" value="1"/>
</dbReference>
<dbReference type="SUPFAM" id="SSF46915">
    <property type="entry name" value="Polynucleotide phosphorylase/guanosine pentaphosphate synthase (PNPase/GPSI), domain 3"/>
    <property type="match status" value="1"/>
</dbReference>
<dbReference type="SUPFAM" id="SSF55666">
    <property type="entry name" value="Ribonuclease PH domain 2-like"/>
    <property type="match status" value="2"/>
</dbReference>
<dbReference type="SUPFAM" id="SSF54211">
    <property type="entry name" value="Ribosomal protein S5 domain 2-like"/>
    <property type="match status" value="2"/>
</dbReference>
<dbReference type="PROSITE" id="PS50084">
    <property type="entry name" value="KH_TYPE_1"/>
    <property type="match status" value="1"/>
</dbReference>
<dbReference type="PROSITE" id="PS50126">
    <property type="entry name" value="S1"/>
    <property type="match status" value="1"/>
</dbReference>
<organism>
    <name type="scientific">Helicobacter pylori (strain J99 / ATCC 700824)</name>
    <name type="common">Campylobacter pylori J99</name>
    <dbReference type="NCBI Taxonomy" id="85963"/>
    <lineage>
        <taxon>Bacteria</taxon>
        <taxon>Pseudomonadati</taxon>
        <taxon>Campylobacterota</taxon>
        <taxon>Epsilonproteobacteria</taxon>
        <taxon>Campylobacterales</taxon>
        <taxon>Helicobacteraceae</taxon>
        <taxon>Helicobacter</taxon>
    </lineage>
</organism>
<evidence type="ECO:0000255" key="1">
    <source>
        <dbReference type="HAMAP-Rule" id="MF_01595"/>
    </source>
</evidence>
<proteinExistence type="inferred from homology"/>
<protein>
    <recommendedName>
        <fullName evidence="1">Polyribonucleotide nucleotidyltransferase</fullName>
        <ecNumber evidence="1">2.7.7.8</ecNumber>
    </recommendedName>
    <alternativeName>
        <fullName evidence="1">Polynucleotide phosphorylase</fullName>
        <shortName evidence="1">PNPase</shortName>
    </alternativeName>
</protein>
<feature type="chain" id="PRO_0000329680" description="Polyribonucleotide nucleotidyltransferase">
    <location>
        <begin position="1"/>
        <end position="688"/>
    </location>
</feature>
<feature type="domain" description="KH" evidence="1">
    <location>
        <begin position="550"/>
        <end position="609"/>
    </location>
</feature>
<feature type="domain" description="S1 motif" evidence="1">
    <location>
        <begin position="626"/>
        <end position="688"/>
    </location>
</feature>
<feature type="binding site" evidence="1">
    <location>
        <position position="484"/>
    </location>
    <ligand>
        <name>Mg(2+)</name>
        <dbReference type="ChEBI" id="CHEBI:18420"/>
    </ligand>
</feature>
<feature type="binding site" evidence="1">
    <location>
        <position position="490"/>
    </location>
    <ligand>
        <name>Mg(2+)</name>
        <dbReference type="ChEBI" id="CHEBI:18420"/>
    </ligand>
</feature>
<gene>
    <name evidence="1" type="primary">pnp</name>
    <name type="ordered locus">jhp_1136</name>
</gene>
<keyword id="KW-0963">Cytoplasm</keyword>
<keyword id="KW-0460">Magnesium</keyword>
<keyword id="KW-0479">Metal-binding</keyword>
<keyword id="KW-0548">Nucleotidyltransferase</keyword>
<keyword id="KW-0694">RNA-binding</keyword>
<keyword id="KW-0808">Transferase</keyword>
<sequence>MDFITINSGNRTEEFALKQVAKQATSSLMYRLGKTLILASVCVEREPVSEDFLPLVVQFLEKSYAAGKIPGGFVKREGRAQDFEILTSRLIDRTLRPLFPKDYRYPTQITLMVLNHDIENDLQVSALNAASATLFLAHIAPIKSVSACRIARVDNEFIINPSASLLNQSSLDLFVSGTKESLNMIEMRSLGQKLNALEEPLMLEALELAQKSLKETCALYEEAFTPYQNELLFKEGEGIVLNERLLDLLKNQYFDEIIKGIESSALSERENVFKEVAKKISEAHSEFSLEEIELSLEKVKKTEIRRMIIQDKIRPDKRALEEVRPISIESNLLPMAHSSILFTRGQTQSLVVGVLGMDNDAQTHENLEHKAPIKERFMFHYNFPPFCVGEASSIGATSRRELGHGNLAKRALETSIKNKEQVIRLVSEILESNGSSSMASVCAGSLALYASGVEIHDLVAGVAMGMVSERQDHAILSDISGLEDAEGDMDFKIAGNLEGITAMQMDTKMSGIQLEVLYQALLQAKRARKHILKIMHEAKEKIVINFSHLPQTEIFNVAPDKIIEIIGQGGRVIKEIVEKFEVKIDLNTPSGEVKIMGNKERVLKTKEFILNYLHSLDQELEQYAIDEVLEAQVKRIVDFGAFLSLPKGGEGLLRKQNMDKCQVILKEGDSIRCRVISFNKGKIALDLA</sequence>
<comment type="function">
    <text evidence="1">Involved in mRNA degradation. Catalyzes the phosphorolysis of single-stranded polyribonucleotides processively in the 3'- to 5'-direction.</text>
</comment>
<comment type="catalytic activity">
    <reaction evidence="1">
        <text>RNA(n+1) + phosphate = RNA(n) + a ribonucleoside 5'-diphosphate</text>
        <dbReference type="Rhea" id="RHEA:22096"/>
        <dbReference type="Rhea" id="RHEA-COMP:14527"/>
        <dbReference type="Rhea" id="RHEA-COMP:17342"/>
        <dbReference type="ChEBI" id="CHEBI:43474"/>
        <dbReference type="ChEBI" id="CHEBI:57930"/>
        <dbReference type="ChEBI" id="CHEBI:140395"/>
        <dbReference type="EC" id="2.7.7.8"/>
    </reaction>
</comment>
<comment type="cofactor">
    <cofactor evidence="1">
        <name>Mg(2+)</name>
        <dbReference type="ChEBI" id="CHEBI:18420"/>
    </cofactor>
</comment>
<comment type="subcellular location">
    <subcellularLocation>
        <location evidence="1">Cytoplasm</location>
    </subcellularLocation>
</comment>
<comment type="similarity">
    <text evidence="1">Belongs to the polyribonucleotide nucleotidyltransferase family.</text>
</comment>
<accession>Q9ZK11</accession>